<proteinExistence type="inferred from homology"/>
<sequence>MGVPTKISILGRESIVADFGIWRNYVAKDLLSNCASSTYILISDTNLTPLYLAGFQQSFENAAAGLSPKPRLLTYEIPPGESSKSRETKAEIEDWMLTRQPPCGRDTVIIALGGGVIGDLIGFVAATYMRGVRFVQVPTTLLAMVDSSIGGKTAIDTPNGKNLIGAIWQPQRIYLDMEFLNTLPEREFINGMAEVIKTAAISSEEKFAALENDADVILAAVKSKNTPDRLRFSSIQETLKRTILSSAEFKAQVVSADEREGGLRNLLNFGHSIGHAIEAILAPQVLHGECVSIGMVKEAELARHLGILNNVSVARIAKCLASYELPTSLKDERIKRLTAGKHCSVEQIITYMGVDKKNDGPKKKVVLLSAIGRTYEPRASTVSNEDLQVVLAPSIEVYPGFPKSLNVTCTPPGSKSISNRALVLAALGSGTCRIKNLLHSDDTEVMLTALERLGAATFSWESQGEVLVVNGNGGRMVASPKELYLGNAGTASRFLTTVATLAQKGSVASSVLTGNARMKQRPIGDLVDALKSNGADIEYLENPKSLPLKITASGGFAGGEMRLDAKVSSQYVTSLLMCAPYANEPVTLRLVGGKPVSQLYVDMTTAMMRSFGIDVKKSETEEHTYHIPRGVYKNPAEYVVESDASSATYPLAIAAMTGTSCTVPNIGSKSLQGDARFAIEVLRPMGCTVNQTDFSTSVTGTAGGKLKSLPTIDMEPMTDAFLTASVLAAVARGQGSNHTTRICGIANQRVKECNRIKAMKDELAKFGVTCREHDDGLEIDGIDRSTLRHPTEGVFCYDDHRVAMSFSVLALVAPQPTLILEKECVGKTWPGWWNTLAQTFKVKLDGKEVEVEEVEVEERAKTNGVAHLDKSAASIFIIGMRGAGKTTSGVWVSKALQRPFIDLDDELEKSEGMTIPEMIKQRGWEGFRDSELALLRRVMTEKPMGYIFACGGGVVELPEARELLTQYHKTKGNVILAMRDIKEVMDFLKIDKTRPAYVEDMMSVWLRRKPWYQECSNIQYYSRITQPDGMAQVLHGFNRFLKVITGQLDSLAQMRRKENTFFVSLTFPDLTPASNILKEVTLGSDAVELRVDLLKDPQSDSEIPSVDYVAEQISVLRSRVSVPLVFTIRTKSQGGRFPDDAYDAALQLYRLAIRMGSEFVDLELSFPKQLLRTVTEMKGFSKIIASHHDPEGLLSWANGSWIQIYNKALQYGDVIKLVGVAKTLDDNASLKKFKTWAEAKHDVPLIAINMGYKGQLSRILNGFMTPVSHPSLPFKAAPGQLSAREIRKGLSLMGEIKAKKFAVIGKPVSSSRSPAMHNALFKQMGLPHTYGRIETDNVEDVKEFILSPDFGGASVTIPLKLDIMPLLDEIAPEAEMIGAVNTIVSVPAAPGDKFQSSRLIGRNTDWQGMVRCLSDAGAYSAATPTTSSAGLIIGGGGTARAAIFALNSMSYSPIYIVGRSPEKLACMASSFPADYNIRIVDDVKALESLPMVAIGTIPGDKPIELHMREVLCEILSLCEKANVEAERKTGITPKRILLEMAYKPSVTSLMKLASDAGWTVLPGLEVLVAQGVYQSEYWTDITPVYENARKAVMGVSSSDDTIS</sequence>
<name>ARO1_PARBP</name>
<gene>
    <name type="ORF">PABG_02447</name>
</gene>
<feature type="chain" id="PRO_0000406730" description="Pentafunctional AROM polypeptide">
    <location>
        <begin position="1"/>
        <end position="1603"/>
    </location>
</feature>
<feature type="region of interest" description="3-dehydroquinate synthase">
    <location>
        <begin position="1"/>
        <end position="384"/>
    </location>
</feature>
<feature type="region of interest" description="EPSP synthase">
    <location>
        <begin position="397"/>
        <end position="842"/>
    </location>
</feature>
<feature type="region of interest" description="Shikimate kinase">
    <location>
        <begin position="872"/>
        <end position="1064"/>
    </location>
</feature>
<feature type="region of interest" description="3-dehydroquinase">
    <location>
        <begin position="1065"/>
        <end position="1285"/>
    </location>
</feature>
<feature type="region of interest" description="Shikimate dehydrogenase">
    <location>
        <begin position="1298"/>
        <end position="1603"/>
    </location>
</feature>
<feature type="active site" description="Proton acceptor; for 3-dehydroquinate synthase activity" evidence="1">
    <location>
        <position position="260"/>
    </location>
</feature>
<feature type="active site" description="Proton acceptor; for 3-dehydroquinate synthase activity" evidence="1">
    <location>
        <position position="275"/>
    </location>
</feature>
<feature type="active site" description="For EPSP synthase activity" evidence="1">
    <location>
        <position position="824"/>
    </location>
</feature>
<feature type="active site" description="Proton acceptor; for 3-dehydroquinate dehydratase activity" evidence="1">
    <location>
        <position position="1188"/>
    </location>
</feature>
<feature type="active site" description="Schiff-base intermediate with substrate; for 3-dehydroquinate dehydratase activity" evidence="1">
    <location>
        <position position="1216"/>
    </location>
</feature>
<feature type="binding site" evidence="1">
    <location>
        <begin position="44"/>
        <end position="46"/>
    </location>
    <ligand>
        <name>NAD(+)</name>
        <dbReference type="ChEBI" id="CHEBI:57540"/>
    </ligand>
</feature>
<feature type="binding site" evidence="1">
    <location>
        <begin position="81"/>
        <end position="84"/>
    </location>
    <ligand>
        <name>NAD(+)</name>
        <dbReference type="ChEBI" id="CHEBI:57540"/>
    </ligand>
</feature>
<feature type="binding site" evidence="1">
    <location>
        <begin position="114"/>
        <end position="116"/>
    </location>
    <ligand>
        <name>NAD(+)</name>
        <dbReference type="ChEBI" id="CHEBI:57540"/>
    </ligand>
</feature>
<feature type="binding site" evidence="1">
    <location>
        <position position="119"/>
    </location>
    <ligand>
        <name>NAD(+)</name>
        <dbReference type="ChEBI" id="CHEBI:57540"/>
    </ligand>
</feature>
<feature type="binding site" evidence="1">
    <location>
        <position position="130"/>
    </location>
    <ligand>
        <name>7-phospho-2-dehydro-3-deoxy-D-arabino-heptonate</name>
        <dbReference type="ChEBI" id="CHEBI:58394"/>
    </ligand>
</feature>
<feature type="binding site" evidence="1">
    <location>
        <begin position="139"/>
        <end position="140"/>
    </location>
    <ligand>
        <name>NAD(+)</name>
        <dbReference type="ChEBI" id="CHEBI:57540"/>
    </ligand>
</feature>
<feature type="binding site" evidence="1">
    <location>
        <position position="146"/>
    </location>
    <ligand>
        <name>7-phospho-2-dehydro-3-deoxy-D-arabino-heptonate</name>
        <dbReference type="ChEBI" id="CHEBI:58394"/>
    </ligand>
</feature>
<feature type="binding site" evidence="1">
    <location>
        <position position="152"/>
    </location>
    <ligand>
        <name>7-phospho-2-dehydro-3-deoxy-D-arabino-heptonate</name>
        <dbReference type="ChEBI" id="CHEBI:58394"/>
    </ligand>
</feature>
<feature type="binding site" evidence="1">
    <location>
        <position position="161"/>
    </location>
    <ligand>
        <name>NAD(+)</name>
        <dbReference type="ChEBI" id="CHEBI:57540"/>
    </ligand>
</feature>
<feature type="binding site" evidence="1">
    <location>
        <position position="162"/>
    </location>
    <ligand>
        <name>7-phospho-2-dehydro-3-deoxy-D-arabino-heptonate</name>
        <dbReference type="ChEBI" id="CHEBI:58394"/>
    </ligand>
</feature>
<feature type="binding site" evidence="1">
    <location>
        <begin position="179"/>
        <end position="182"/>
    </location>
    <ligand>
        <name>NAD(+)</name>
        <dbReference type="ChEBI" id="CHEBI:57540"/>
    </ligand>
</feature>
<feature type="binding site" evidence="1">
    <location>
        <position position="190"/>
    </location>
    <ligand>
        <name>NAD(+)</name>
        <dbReference type="ChEBI" id="CHEBI:57540"/>
    </ligand>
</feature>
<feature type="binding site" evidence="1">
    <location>
        <begin position="194"/>
        <end position="197"/>
    </location>
    <ligand>
        <name>7-phospho-2-dehydro-3-deoxy-D-arabino-heptonate</name>
        <dbReference type="ChEBI" id="CHEBI:58394"/>
    </ligand>
</feature>
<feature type="binding site" evidence="1">
    <location>
        <position position="194"/>
    </location>
    <ligand>
        <name>Zn(2+)</name>
        <dbReference type="ChEBI" id="CHEBI:29105"/>
        <note>catalytic</note>
    </ligand>
</feature>
<feature type="binding site" evidence="1">
    <location>
        <position position="250"/>
    </location>
    <ligand>
        <name>7-phospho-2-dehydro-3-deoxy-D-arabino-heptonate</name>
        <dbReference type="ChEBI" id="CHEBI:58394"/>
    </ligand>
</feature>
<feature type="binding site" evidence="1">
    <location>
        <begin position="264"/>
        <end position="268"/>
    </location>
    <ligand>
        <name>7-phospho-2-dehydro-3-deoxy-D-arabino-heptonate</name>
        <dbReference type="ChEBI" id="CHEBI:58394"/>
    </ligand>
</feature>
<feature type="binding site" evidence="1">
    <location>
        <position position="271"/>
    </location>
    <ligand>
        <name>7-phospho-2-dehydro-3-deoxy-D-arabino-heptonate</name>
        <dbReference type="ChEBI" id="CHEBI:58394"/>
    </ligand>
</feature>
<feature type="binding site" evidence="1">
    <location>
        <position position="271"/>
    </location>
    <ligand>
        <name>Zn(2+)</name>
        <dbReference type="ChEBI" id="CHEBI:29105"/>
        <note>catalytic</note>
    </ligand>
</feature>
<feature type="binding site" evidence="1">
    <location>
        <position position="287"/>
    </location>
    <ligand>
        <name>7-phospho-2-dehydro-3-deoxy-D-arabino-heptonate</name>
        <dbReference type="ChEBI" id="CHEBI:58394"/>
    </ligand>
</feature>
<feature type="binding site" evidence="1">
    <location>
        <position position="287"/>
    </location>
    <ligand>
        <name>Zn(2+)</name>
        <dbReference type="ChEBI" id="CHEBI:29105"/>
        <note>catalytic</note>
    </ligand>
</feature>
<feature type="binding site" evidence="1">
    <location>
        <position position="356"/>
    </location>
    <ligand>
        <name>7-phospho-2-dehydro-3-deoxy-D-arabino-heptonate</name>
        <dbReference type="ChEBI" id="CHEBI:58394"/>
    </ligand>
</feature>
<feature type="binding site" evidence="1">
    <location>
        <begin position="879"/>
        <end position="886"/>
    </location>
    <ligand>
        <name>ATP</name>
        <dbReference type="ChEBI" id="CHEBI:30616"/>
    </ligand>
</feature>
<evidence type="ECO:0000255" key="1">
    <source>
        <dbReference type="HAMAP-Rule" id="MF_03143"/>
    </source>
</evidence>
<protein>
    <recommendedName>
        <fullName evidence="1">Pentafunctional AROM polypeptide</fullName>
    </recommendedName>
    <domain>
        <recommendedName>
            <fullName evidence="1">3-dehydroquinate synthase</fullName>
            <shortName evidence="1">DHQS</shortName>
            <ecNumber evidence="1">4.2.3.4</ecNumber>
        </recommendedName>
    </domain>
    <domain>
        <recommendedName>
            <fullName evidence="1">3-phosphoshikimate 1-carboxyvinyltransferase</fullName>
            <ecNumber evidence="1">2.5.1.19</ecNumber>
        </recommendedName>
        <alternativeName>
            <fullName evidence="1">5-enolpyruvylshikimate-3-phosphate synthase</fullName>
            <shortName evidence="1">EPSP synthase</shortName>
            <shortName evidence="1">EPSPS</shortName>
        </alternativeName>
    </domain>
    <domain>
        <recommendedName>
            <fullName evidence="1">Shikimate kinase</fullName>
            <shortName evidence="1">SK</shortName>
            <ecNumber evidence="1">2.7.1.71</ecNumber>
        </recommendedName>
    </domain>
    <domain>
        <recommendedName>
            <fullName evidence="1">3-dehydroquinate dehydratase</fullName>
            <shortName evidence="1">3-dehydroquinase</shortName>
            <ecNumber evidence="1">4.2.1.10</ecNumber>
        </recommendedName>
    </domain>
    <domain>
        <recommendedName>
            <fullName evidence="1">Shikimate dehydrogenase</fullName>
            <ecNumber evidence="1">1.1.1.25</ecNumber>
        </recommendedName>
    </domain>
</protein>
<reference key="1">
    <citation type="journal article" date="2011" name="PLoS Genet.">
        <title>Comparative genomic analysis of human fungal pathogens causing paracoccidioidomycosis.</title>
        <authorList>
            <person name="Desjardins C.A."/>
            <person name="Champion M.D."/>
            <person name="Holder J.W."/>
            <person name="Muszewska A."/>
            <person name="Goldberg J."/>
            <person name="Bailao A.M."/>
            <person name="Brigido M.M."/>
            <person name="Ferreira M.E."/>
            <person name="Garcia A.M."/>
            <person name="Grynberg M."/>
            <person name="Gujja S."/>
            <person name="Heiman D.I."/>
            <person name="Henn M.R."/>
            <person name="Kodira C.D."/>
            <person name="Leon-Narvaez H."/>
            <person name="Longo L.V.G."/>
            <person name="Ma L.-J."/>
            <person name="Malavazi I."/>
            <person name="Matsuo A.L."/>
            <person name="Morais F.V."/>
            <person name="Pereira M."/>
            <person name="Rodriguez-Brito S."/>
            <person name="Sakthikumar S."/>
            <person name="Salem-Izacc S.M."/>
            <person name="Sykes S.M."/>
            <person name="Teixeira M.M."/>
            <person name="Vallejo M.C."/>
            <person name="Walter M.E."/>
            <person name="Yandava C."/>
            <person name="Young S."/>
            <person name="Zeng Q."/>
            <person name="Zucker J."/>
            <person name="Felipe M.S."/>
            <person name="Goldman G.H."/>
            <person name="Haas B.J."/>
            <person name="McEwen J.G."/>
            <person name="Nino-Vega G."/>
            <person name="Puccia R."/>
            <person name="San-Blas G."/>
            <person name="Soares C.M."/>
            <person name="Birren B.W."/>
            <person name="Cuomo C.A."/>
        </authorList>
    </citation>
    <scope>NUCLEOTIDE SEQUENCE [LARGE SCALE GENOMIC DNA]</scope>
    <source>
        <strain>Pb03</strain>
    </source>
</reference>
<keyword id="KW-0028">Amino-acid biosynthesis</keyword>
<keyword id="KW-0057">Aromatic amino acid biosynthesis</keyword>
<keyword id="KW-0067">ATP-binding</keyword>
<keyword id="KW-0963">Cytoplasm</keyword>
<keyword id="KW-0418">Kinase</keyword>
<keyword id="KW-0456">Lyase</keyword>
<keyword id="KW-0479">Metal-binding</keyword>
<keyword id="KW-0511">Multifunctional enzyme</keyword>
<keyword id="KW-0521">NADP</keyword>
<keyword id="KW-0547">Nucleotide-binding</keyword>
<keyword id="KW-0560">Oxidoreductase</keyword>
<keyword id="KW-0808">Transferase</keyword>
<keyword id="KW-0862">Zinc</keyword>
<comment type="function">
    <text evidence="1">The AROM polypeptide catalyzes 5 consecutive enzymatic reactions in prechorismate polyaromatic amino acid biosynthesis.</text>
</comment>
<comment type="catalytic activity">
    <reaction evidence="1">
        <text>7-phospho-2-dehydro-3-deoxy-D-arabino-heptonate = 3-dehydroquinate + phosphate</text>
        <dbReference type="Rhea" id="RHEA:21968"/>
        <dbReference type="ChEBI" id="CHEBI:32364"/>
        <dbReference type="ChEBI" id="CHEBI:43474"/>
        <dbReference type="ChEBI" id="CHEBI:58394"/>
        <dbReference type="EC" id="4.2.3.4"/>
    </reaction>
</comment>
<comment type="catalytic activity">
    <reaction evidence="1">
        <text>3-dehydroquinate = 3-dehydroshikimate + H2O</text>
        <dbReference type="Rhea" id="RHEA:21096"/>
        <dbReference type="ChEBI" id="CHEBI:15377"/>
        <dbReference type="ChEBI" id="CHEBI:16630"/>
        <dbReference type="ChEBI" id="CHEBI:32364"/>
        <dbReference type="EC" id="4.2.1.10"/>
    </reaction>
</comment>
<comment type="catalytic activity">
    <reaction evidence="1">
        <text>shikimate + NADP(+) = 3-dehydroshikimate + NADPH + H(+)</text>
        <dbReference type="Rhea" id="RHEA:17737"/>
        <dbReference type="ChEBI" id="CHEBI:15378"/>
        <dbReference type="ChEBI" id="CHEBI:16630"/>
        <dbReference type="ChEBI" id="CHEBI:36208"/>
        <dbReference type="ChEBI" id="CHEBI:57783"/>
        <dbReference type="ChEBI" id="CHEBI:58349"/>
        <dbReference type="EC" id="1.1.1.25"/>
    </reaction>
</comment>
<comment type="catalytic activity">
    <reaction evidence="1">
        <text>shikimate + ATP = 3-phosphoshikimate + ADP + H(+)</text>
        <dbReference type="Rhea" id="RHEA:13121"/>
        <dbReference type="ChEBI" id="CHEBI:15378"/>
        <dbReference type="ChEBI" id="CHEBI:30616"/>
        <dbReference type="ChEBI" id="CHEBI:36208"/>
        <dbReference type="ChEBI" id="CHEBI:145989"/>
        <dbReference type="ChEBI" id="CHEBI:456216"/>
        <dbReference type="EC" id="2.7.1.71"/>
    </reaction>
</comment>
<comment type="catalytic activity">
    <reaction evidence="1">
        <text>3-phosphoshikimate + phosphoenolpyruvate = 5-O-(1-carboxyvinyl)-3-phosphoshikimate + phosphate</text>
        <dbReference type="Rhea" id="RHEA:21256"/>
        <dbReference type="ChEBI" id="CHEBI:43474"/>
        <dbReference type="ChEBI" id="CHEBI:57701"/>
        <dbReference type="ChEBI" id="CHEBI:58702"/>
        <dbReference type="ChEBI" id="CHEBI:145989"/>
        <dbReference type="EC" id="2.5.1.19"/>
    </reaction>
</comment>
<comment type="cofactor">
    <cofactor>
        <name>Zn(2+)</name>
        <dbReference type="ChEBI" id="CHEBI:29105"/>
    </cofactor>
    <text>Binds 2 Zn(2+) ions per subunit.</text>
</comment>
<comment type="pathway">
    <text evidence="1">Metabolic intermediate biosynthesis; chorismate biosynthesis; chorismate from D-erythrose 4-phosphate and phosphoenolpyruvate: step 2/7.</text>
</comment>
<comment type="pathway">
    <text evidence="1">Metabolic intermediate biosynthesis; chorismate biosynthesis; chorismate from D-erythrose 4-phosphate and phosphoenolpyruvate: step 3/7.</text>
</comment>
<comment type="pathway">
    <text evidence="1">Metabolic intermediate biosynthesis; chorismate biosynthesis; chorismate from D-erythrose 4-phosphate and phosphoenolpyruvate: step 4/7.</text>
</comment>
<comment type="pathway">
    <text evidence="1">Metabolic intermediate biosynthesis; chorismate biosynthesis; chorismate from D-erythrose 4-phosphate and phosphoenolpyruvate: step 5/7.</text>
</comment>
<comment type="pathway">
    <text evidence="1">Metabolic intermediate biosynthesis; chorismate biosynthesis; chorismate from D-erythrose 4-phosphate and phosphoenolpyruvate: step 6/7.</text>
</comment>
<comment type="subunit">
    <text evidence="1">Homodimer.</text>
</comment>
<comment type="subcellular location">
    <subcellularLocation>
        <location evidence="1">Cytoplasm</location>
    </subcellularLocation>
</comment>
<comment type="similarity">
    <text evidence="1">In the N-terminal section; belongs to the sugar phosphate cyclases superfamily. Dehydroquinate synthase family.</text>
</comment>
<comment type="similarity">
    <text evidence="1">In the 2nd section; belongs to the EPSP synthase family.</text>
</comment>
<comment type="similarity">
    <text evidence="1">In the 3rd section; belongs to the shikimate kinase family.</text>
</comment>
<comment type="similarity">
    <text evidence="1">In the 4th section; belongs to the type-I 3-dehydroquinase family.</text>
</comment>
<comment type="similarity">
    <text evidence="1">In the C-terminal section; belongs to the shikimate dehydrogenase family.</text>
</comment>
<organism>
    <name type="scientific">Paracoccidioides brasiliensis (strain Pb03)</name>
    <dbReference type="NCBI Taxonomy" id="482561"/>
    <lineage>
        <taxon>Eukaryota</taxon>
        <taxon>Fungi</taxon>
        <taxon>Dikarya</taxon>
        <taxon>Ascomycota</taxon>
        <taxon>Pezizomycotina</taxon>
        <taxon>Eurotiomycetes</taxon>
        <taxon>Eurotiomycetidae</taxon>
        <taxon>Onygenales</taxon>
        <taxon>Ajellomycetaceae</taxon>
        <taxon>Paracoccidioides</taxon>
    </lineage>
</organism>
<accession>C0S433</accession>
<dbReference type="EC" id="4.2.3.4" evidence="1"/>
<dbReference type="EC" id="2.5.1.19" evidence="1"/>
<dbReference type="EC" id="2.7.1.71" evidence="1"/>
<dbReference type="EC" id="4.2.1.10" evidence="1"/>
<dbReference type="EC" id="1.1.1.25" evidence="1"/>
<dbReference type="EMBL" id="KN305533">
    <property type="protein sequence ID" value="EEH20188.1"/>
    <property type="molecule type" value="Genomic_DNA"/>
</dbReference>
<dbReference type="SMR" id="C0S433"/>
<dbReference type="VEuPathDB" id="FungiDB:PABG_02447"/>
<dbReference type="HOGENOM" id="CLU_001201_1_2_1"/>
<dbReference type="OrthoDB" id="1583at33183"/>
<dbReference type="UniPathway" id="UPA00053">
    <property type="reaction ID" value="UER00085"/>
</dbReference>
<dbReference type="UniPathway" id="UPA00053">
    <property type="reaction ID" value="UER00086"/>
</dbReference>
<dbReference type="UniPathway" id="UPA00053">
    <property type="reaction ID" value="UER00087"/>
</dbReference>
<dbReference type="UniPathway" id="UPA00053">
    <property type="reaction ID" value="UER00088"/>
</dbReference>
<dbReference type="UniPathway" id="UPA00053">
    <property type="reaction ID" value="UER00089"/>
</dbReference>
<dbReference type="GO" id="GO:0005737">
    <property type="term" value="C:cytoplasm"/>
    <property type="evidence" value="ECO:0007669"/>
    <property type="project" value="UniProtKB-SubCell"/>
</dbReference>
<dbReference type="GO" id="GO:0003855">
    <property type="term" value="F:3-dehydroquinate dehydratase activity"/>
    <property type="evidence" value="ECO:0007669"/>
    <property type="project" value="UniProtKB-UniRule"/>
</dbReference>
<dbReference type="GO" id="GO:0003856">
    <property type="term" value="F:3-dehydroquinate synthase activity"/>
    <property type="evidence" value="ECO:0007669"/>
    <property type="project" value="UniProtKB-UniRule"/>
</dbReference>
<dbReference type="GO" id="GO:0003866">
    <property type="term" value="F:3-phosphoshikimate 1-carboxyvinyltransferase activity"/>
    <property type="evidence" value="ECO:0007669"/>
    <property type="project" value="UniProtKB-UniRule"/>
</dbReference>
<dbReference type="GO" id="GO:0005524">
    <property type="term" value="F:ATP binding"/>
    <property type="evidence" value="ECO:0007669"/>
    <property type="project" value="UniProtKB-UniRule"/>
</dbReference>
<dbReference type="GO" id="GO:0046872">
    <property type="term" value="F:metal ion binding"/>
    <property type="evidence" value="ECO:0007669"/>
    <property type="project" value="UniProtKB-UniRule"/>
</dbReference>
<dbReference type="GO" id="GO:0004764">
    <property type="term" value="F:shikimate 3-dehydrogenase (NADP+) activity"/>
    <property type="evidence" value="ECO:0007669"/>
    <property type="project" value="UniProtKB-UniRule"/>
</dbReference>
<dbReference type="GO" id="GO:0004765">
    <property type="term" value="F:shikimate kinase activity"/>
    <property type="evidence" value="ECO:0007669"/>
    <property type="project" value="UniProtKB-UniRule"/>
</dbReference>
<dbReference type="GO" id="GO:0008652">
    <property type="term" value="P:amino acid biosynthetic process"/>
    <property type="evidence" value="ECO:0007669"/>
    <property type="project" value="UniProtKB-KW"/>
</dbReference>
<dbReference type="GO" id="GO:0009073">
    <property type="term" value="P:aromatic amino acid family biosynthetic process"/>
    <property type="evidence" value="ECO:0007669"/>
    <property type="project" value="UniProtKB-UniRule"/>
</dbReference>
<dbReference type="GO" id="GO:0009423">
    <property type="term" value="P:chorismate biosynthetic process"/>
    <property type="evidence" value="ECO:0007669"/>
    <property type="project" value="UniProtKB-UniRule"/>
</dbReference>
<dbReference type="CDD" id="cd00502">
    <property type="entry name" value="DHQase_I"/>
    <property type="match status" value="1"/>
</dbReference>
<dbReference type="CDD" id="cd08195">
    <property type="entry name" value="DHQS"/>
    <property type="match status" value="1"/>
</dbReference>
<dbReference type="CDD" id="cd01556">
    <property type="entry name" value="EPSP_synthase"/>
    <property type="match status" value="1"/>
</dbReference>
<dbReference type="CDD" id="cd01065">
    <property type="entry name" value="NAD_bind_Shikimate_DH"/>
    <property type="match status" value="1"/>
</dbReference>
<dbReference type="CDD" id="cd00464">
    <property type="entry name" value="SK"/>
    <property type="match status" value="1"/>
</dbReference>
<dbReference type="FunFam" id="1.20.1090.10:FF:000007">
    <property type="entry name" value="Pentafunctional AROM polypeptide"/>
    <property type="match status" value="1"/>
</dbReference>
<dbReference type="FunFam" id="3.20.20.70:FF:000135">
    <property type="entry name" value="Pentafunctional AROM polypeptide"/>
    <property type="match status" value="1"/>
</dbReference>
<dbReference type="FunFam" id="3.40.50.1970:FF:000007">
    <property type="entry name" value="Pentafunctional AROM polypeptide"/>
    <property type="match status" value="1"/>
</dbReference>
<dbReference type="FunFam" id="3.40.50.300:FF:001256">
    <property type="entry name" value="Pentafunctional AROM polypeptide"/>
    <property type="match status" value="1"/>
</dbReference>
<dbReference type="FunFam" id="3.65.10.10:FF:000007">
    <property type="entry name" value="Pentafunctional AROM polypeptide"/>
    <property type="match status" value="1"/>
</dbReference>
<dbReference type="FunFam" id="3.65.10.10:FF:000008">
    <property type="entry name" value="Pentafunctional AROM polypeptide"/>
    <property type="match status" value="1"/>
</dbReference>
<dbReference type="Gene3D" id="3.40.50.1970">
    <property type="match status" value="1"/>
</dbReference>
<dbReference type="Gene3D" id="3.20.20.70">
    <property type="entry name" value="Aldolase class I"/>
    <property type="match status" value="1"/>
</dbReference>
<dbReference type="Gene3D" id="1.20.1090.10">
    <property type="entry name" value="Dehydroquinate synthase-like - alpha domain"/>
    <property type="match status" value="1"/>
</dbReference>
<dbReference type="Gene3D" id="3.65.10.10">
    <property type="entry name" value="Enolpyruvate transferase domain"/>
    <property type="match status" value="2"/>
</dbReference>
<dbReference type="Gene3D" id="3.40.50.10860">
    <property type="entry name" value="Leucine Dehydrogenase, chain A, domain 1"/>
    <property type="match status" value="1"/>
</dbReference>
<dbReference type="Gene3D" id="3.40.50.720">
    <property type="entry name" value="NAD(P)-binding Rossmann-like Domain"/>
    <property type="match status" value="1"/>
</dbReference>
<dbReference type="Gene3D" id="3.40.50.300">
    <property type="entry name" value="P-loop containing nucleotide triphosphate hydrolases"/>
    <property type="match status" value="1"/>
</dbReference>
<dbReference type="HAMAP" id="MF_00210">
    <property type="entry name" value="EPSP_synth"/>
    <property type="match status" value="1"/>
</dbReference>
<dbReference type="HAMAP" id="MF_03143">
    <property type="entry name" value="Pentafunct_AroM"/>
    <property type="match status" value="1"/>
</dbReference>
<dbReference type="HAMAP" id="MF_00109">
    <property type="entry name" value="Shikimate_kinase"/>
    <property type="match status" value="1"/>
</dbReference>
<dbReference type="InterPro" id="IPR018508">
    <property type="entry name" value="3-dehydroquinate_DH_AS"/>
</dbReference>
<dbReference type="InterPro" id="IPR013785">
    <property type="entry name" value="Aldolase_TIM"/>
</dbReference>
<dbReference type="InterPro" id="IPR046346">
    <property type="entry name" value="Aminoacid_DH-like_N_sf"/>
</dbReference>
<dbReference type="InterPro" id="IPR016037">
    <property type="entry name" value="DHQ_synth_AroB"/>
</dbReference>
<dbReference type="InterPro" id="IPR030960">
    <property type="entry name" value="DHQS/DOIS_N"/>
</dbReference>
<dbReference type="InterPro" id="IPR056179">
    <property type="entry name" value="DHQS_C"/>
</dbReference>
<dbReference type="InterPro" id="IPR001381">
    <property type="entry name" value="DHquinase_I"/>
</dbReference>
<dbReference type="InterPro" id="IPR001986">
    <property type="entry name" value="Enolpyruvate_Tfrase_dom"/>
</dbReference>
<dbReference type="InterPro" id="IPR036968">
    <property type="entry name" value="Enolpyruvate_Tfrase_sf"/>
</dbReference>
<dbReference type="InterPro" id="IPR006264">
    <property type="entry name" value="EPSP_synthase"/>
</dbReference>
<dbReference type="InterPro" id="IPR023193">
    <property type="entry name" value="EPSP_synthase_CS"/>
</dbReference>
<dbReference type="InterPro" id="IPR036291">
    <property type="entry name" value="NAD(P)-bd_dom_sf"/>
</dbReference>
<dbReference type="InterPro" id="IPR027417">
    <property type="entry name" value="P-loop_NTPase"/>
</dbReference>
<dbReference type="InterPro" id="IPR008289">
    <property type="entry name" value="Pentafunct_AroM"/>
</dbReference>
<dbReference type="InterPro" id="IPR013792">
    <property type="entry name" value="RNA3'P_cycl/enolpyr_Trfase_a/b"/>
</dbReference>
<dbReference type="InterPro" id="IPR031322">
    <property type="entry name" value="Shikimate/glucono_kinase"/>
</dbReference>
<dbReference type="InterPro" id="IPR013708">
    <property type="entry name" value="Shikimate_DH-bd_N"/>
</dbReference>
<dbReference type="InterPro" id="IPR010110">
    <property type="entry name" value="Shikimate_DH_AroM-type"/>
</dbReference>
<dbReference type="InterPro" id="IPR000623">
    <property type="entry name" value="Shikimate_kinase/TSH1"/>
</dbReference>
<dbReference type="InterPro" id="IPR023000">
    <property type="entry name" value="Shikimate_kinase_CS"/>
</dbReference>
<dbReference type="NCBIfam" id="TIGR01356">
    <property type="entry name" value="aroA"/>
    <property type="match status" value="1"/>
</dbReference>
<dbReference type="NCBIfam" id="TIGR01357">
    <property type="entry name" value="aroB"/>
    <property type="match status" value="1"/>
</dbReference>
<dbReference type="NCBIfam" id="TIGR01093">
    <property type="entry name" value="aroD"/>
    <property type="match status" value="1"/>
</dbReference>
<dbReference type="NCBIfam" id="TIGR01809">
    <property type="entry name" value="Shik-DH-AROM"/>
    <property type="match status" value="1"/>
</dbReference>
<dbReference type="PANTHER" id="PTHR21090">
    <property type="entry name" value="AROM/DEHYDROQUINATE SYNTHASE"/>
    <property type="match status" value="1"/>
</dbReference>
<dbReference type="PANTHER" id="PTHR21090:SF5">
    <property type="entry name" value="PENTAFUNCTIONAL AROM POLYPEPTIDE"/>
    <property type="match status" value="1"/>
</dbReference>
<dbReference type="Pfam" id="PF01761">
    <property type="entry name" value="DHQ_synthase"/>
    <property type="match status" value="1"/>
</dbReference>
<dbReference type="Pfam" id="PF24621">
    <property type="entry name" value="DHQS_C"/>
    <property type="match status" value="1"/>
</dbReference>
<dbReference type="Pfam" id="PF01487">
    <property type="entry name" value="DHquinase_I"/>
    <property type="match status" value="1"/>
</dbReference>
<dbReference type="Pfam" id="PF00275">
    <property type="entry name" value="EPSP_synthase"/>
    <property type="match status" value="1"/>
</dbReference>
<dbReference type="Pfam" id="PF08501">
    <property type="entry name" value="Shikimate_dh_N"/>
    <property type="match status" value="1"/>
</dbReference>
<dbReference type="Pfam" id="PF01202">
    <property type="entry name" value="SKI"/>
    <property type="match status" value="1"/>
</dbReference>
<dbReference type="PIRSF" id="PIRSF000514">
    <property type="entry name" value="Pentafunct_AroM"/>
    <property type="match status" value="1"/>
</dbReference>
<dbReference type="PRINTS" id="PR01100">
    <property type="entry name" value="SHIKIMTKNASE"/>
</dbReference>
<dbReference type="SUPFAM" id="SSF51569">
    <property type="entry name" value="Aldolase"/>
    <property type="match status" value="1"/>
</dbReference>
<dbReference type="SUPFAM" id="SSF53223">
    <property type="entry name" value="Aminoacid dehydrogenase-like, N-terminal domain"/>
    <property type="match status" value="1"/>
</dbReference>
<dbReference type="SUPFAM" id="SSF56796">
    <property type="entry name" value="Dehydroquinate synthase-like"/>
    <property type="match status" value="1"/>
</dbReference>
<dbReference type="SUPFAM" id="SSF55205">
    <property type="entry name" value="EPT/RTPC-like"/>
    <property type="match status" value="1"/>
</dbReference>
<dbReference type="SUPFAM" id="SSF51735">
    <property type="entry name" value="NAD(P)-binding Rossmann-fold domains"/>
    <property type="match status" value="1"/>
</dbReference>
<dbReference type="SUPFAM" id="SSF52540">
    <property type="entry name" value="P-loop containing nucleoside triphosphate hydrolases"/>
    <property type="match status" value="1"/>
</dbReference>
<dbReference type="PROSITE" id="PS01028">
    <property type="entry name" value="DEHYDROQUINASE_I"/>
    <property type="match status" value="1"/>
</dbReference>
<dbReference type="PROSITE" id="PS00104">
    <property type="entry name" value="EPSP_SYNTHASE_1"/>
    <property type="match status" value="1"/>
</dbReference>
<dbReference type="PROSITE" id="PS00885">
    <property type="entry name" value="EPSP_SYNTHASE_2"/>
    <property type="match status" value="1"/>
</dbReference>
<dbReference type="PROSITE" id="PS01128">
    <property type="entry name" value="SHIKIMATE_KINASE"/>
    <property type="match status" value="1"/>
</dbReference>